<protein>
    <recommendedName>
        <fullName evidence="1">tRNA pseudouridine synthase A</fullName>
        <ecNumber evidence="1">5.4.99.12</ecNumber>
    </recommendedName>
    <alternativeName>
        <fullName evidence="1">tRNA pseudouridine(38-40) synthase</fullName>
    </alternativeName>
    <alternativeName>
        <fullName evidence="1">tRNA pseudouridylate synthase I</fullName>
    </alternativeName>
    <alternativeName>
        <fullName evidence="1">tRNA-uridine isomerase I</fullName>
    </alternativeName>
</protein>
<reference key="1">
    <citation type="submission" date="2006-03" db="EMBL/GenBank/DDBJ databases">
        <title>Complete sequence of Rhodopseudomonas palustris BisB18.</title>
        <authorList>
            <consortium name="US DOE Joint Genome Institute"/>
            <person name="Copeland A."/>
            <person name="Lucas S."/>
            <person name="Lapidus A."/>
            <person name="Barry K."/>
            <person name="Detter J.C."/>
            <person name="Glavina del Rio T."/>
            <person name="Hammon N."/>
            <person name="Israni S."/>
            <person name="Dalin E."/>
            <person name="Tice H."/>
            <person name="Pitluck S."/>
            <person name="Chain P."/>
            <person name="Malfatti S."/>
            <person name="Shin M."/>
            <person name="Vergez L."/>
            <person name="Schmutz J."/>
            <person name="Larimer F."/>
            <person name="Land M."/>
            <person name="Hauser L."/>
            <person name="Pelletier D.A."/>
            <person name="Kyrpides N."/>
            <person name="Anderson I."/>
            <person name="Oda Y."/>
            <person name="Harwood C.S."/>
            <person name="Richardson P."/>
        </authorList>
    </citation>
    <scope>NUCLEOTIDE SEQUENCE [LARGE SCALE GENOMIC DNA]</scope>
    <source>
        <strain>BisB18</strain>
    </source>
</reference>
<comment type="function">
    <text evidence="1">Formation of pseudouridine at positions 38, 39 and 40 in the anticodon stem and loop of transfer RNAs.</text>
</comment>
<comment type="catalytic activity">
    <reaction evidence="1">
        <text>uridine(38/39/40) in tRNA = pseudouridine(38/39/40) in tRNA</text>
        <dbReference type="Rhea" id="RHEA:22376"/>
        <dbReference type="Rhea" id="RHEA-COMP:10085"/>
        <dbReference type="Rhea" id="RHEA-COMP:10087"/>
        <dbReference type="ChEBI" id="CHEBI:65314"/>
        <dbReference type="ChEBI" id="CHEBI:65315"/>
        <dbReference type="EC" id="5.4.99.12"/>
    </reaction>
</comment>
<comment type="subunit">
    <text evidence="1">Homodimer.</text>
</comment>
<comment type="similarity">
    <text evidence="1">Belongs to the tRNA pseudouridine synthase TruA family.</text>
</comment>
<feature type="chain" id="PRO_1000017151" description="tRNA pseudouridine synthase A">
    <location>
        <begin position="1"/>
        <end position="245"/>
    </location>
</feature>
<feature type="active site" description="Nucleophile" evidence="1">
    <location>
        <position position="52"/>
    </location>
</feature>
<feature type="binding site" evidence="1">
    <location>
        <position position="111"/>
    </location>
    <ligand>
        <name>substrate</name>
    </ligand>
</feature>
<keyword id="KW-0413">Isomerase</keyword>
<keyword id="KW-0819">tRNA processing</keyword>
<name>TRUA_RHOPB</name>
<gene>
    <name evidence="1" type="primary">truA</name>
    <name type="ordered locus">RPC_0807</name>
</gene>
<dbReference type="EC" id="5.4.99.12" evidence="1"/>
<dbReference type="EMBL" id="CP000301">
    <property type="protein sequence ID" value="ABD86378.1"/>
    <property type="molecule type" value="Genomic_DNA"/>
</dbReference>
<dbReference type="SMR" id="Q21B58"/>
<dbReference type="STRING" id="316056.RPC_0807"/>
<dbReference type="KEGG" id="rpc:RPC_0807"/>
<dbReference type="eggNOG" id="COG0101">
    <property type="taxonomic scope" value="Bacteria"/>
</dbReference>
<dbReference type="HOGENOM" id="CLU_014673_0_2_5"/>
<dbReference type="OrthoDB" id="9811823at2"/>
<dbReference type="GO" id="GO:0003723">
    <property type="term" value="F:RNA binding"/>
    <property type="evidence" value="ECO:0007669"/>
    <property type="project" value="InterPro"/>
</dbReference>
<dbReference type="GO" id="GO:0160147">
    <property type="term" value="F:tRNA pseudouridine(38-40) synthase activity"/>
    <property type="evidence" value="ECO:0007669"/>
    <property type="project" value="UniProtKB-EC"/>
</dbReference>
<dbReference type="GO" id="GO:0031119">
    <property type="term" value="P:tRNA pseudouridine synthesis"/>
    <property type="evidence" value="ECO:0007669"/>
    <property type="project" value="UniProtKB-UniRule"/>
</dbReference>
<dbReference type="CDD" id="cd02570">
    <property type="entry name" value="PseudoU_synth_EcTruA"/>
    <property type="match status" value="1"/>
</dbReference>
<dbReference type="FunFam" id="3.30.70.580:FF:000001">
    <property type="entry name" value="tRNA pseudouridine synthase A"/>
    <property type="match status" value="1"/>
</dbReference>
<dbReference type="Gene3D" id="3.30.70.660">
    <property type="entry name" value="Pseudouridine synthase I, catalytic domain, C-terminal subdomain"/>
    <property type="match status" value="1"/>
</dbReference>
<dbReference type="Gene3D" id="3.30.70.580">
    <property type="entry name" value="Pseudouridine synthase I, catalytic domain, N-terminal subdomain"/>
    <property type="match status" value="1"/>
</dbReference>
<dbReference type="HAMAP" id="MF_00171">
    <property type="entry name" value="TruA"/>
    <property type="match status" value="1"/>
</dbReference>
<dbReference type="InterPro" id="IPR020103">
    <property type="entry name" value="PsdUridine_synth_cat_dom_sf"/>
</dbReference>
<dbReference type="InterPro" id="IPR001406">
    <property type="entry name" value="PsdUridine_synth_TruA"/>
</dbReference>
<dbReference type="InterPro" id="IPR020097">
    <property type="entry name" value="PsdUridine_synth_TruA_a/b_dom"/>
</dbReference>
<dbReference type="InterPro" id="IPR020095">
    <property type="entry name" value="PsdUridine_synth_TruA_C"/>
</dbReference>
<dbReference type="InterPro" id="IPR020094">
    <property type="entry name" value="TruA/RsuA/RluB/E/F_N"/>
</dbReference>
<dbReference type="NCBIfam" id="TIGR00071">
    <property type="entry name" value="hisT_truA"/>
    <property type="match status" value="1"/>
</dbReference>
<dbReference type="PANTHER" id="PTHR11142">
    <property type="entry name" value="PSEUDOURIDYLATE SYNTHASE"/>
    <property type="match status" value="1"/>
</dbReference>
<dbReference type="PANTHER" id="PTHR11142:SF0">
    <property type="entry name" value="TRNA PSEUDOURIDINE SYNTHASE-LIKE 1"/>
    <property type="match status" value="1"/>
</dbReference>
<dbReference type="Pfam" id="PF01416">
    <property type="entry name" value="PseudoU_synth_1"/>
    <property type="match status" value="2"/>
</dbReference>
<dbReference type="PIRSF" id="PIRSF001430">
    <property type="entry name" value="tRNA_psdUrid_synth"/>
    <property type="match status" value="1"/>
</dbReference>
<dbReference type="SUPFAM" id="SSF55120">
    <property type="entry name" value="Pseudouridine synthase"/>
    <property type="match status" value="1"/>
</dbReference>
<sequence>MPRYKLIIEYDGAPYCGWQIQDNGPSVQGALETAVKAICGKFVRVNGAGRTDAGVHALAQVAHCDIAKEFAPGRLRDGLNAHLRPHPIGVLSAEIVPDDFEARFSAIKRHYVYRISNRRANLALQIGKVWRLPRRLDTDAMHAAAQRLVGKHDFTTFRDTECQAKSPDKTLDQLDVIRDGDNVSIITSARSFLHSQVRSMVGSLVWVGEGRWSADDLAAALAARRRTACGPVAPPDGLYLVKVDY</sequence>
<evidence type="ECO:0000255" key="1">
    <source>
        <dbReference type="HAMAP-Rule" id="MF_00171"/>
    </source>
</evidence>
<organism>
    <name type="scientific">Rhodopseudomonas palustris (strain BisB18)</name>
    <dbReference type="NCBI Taxonomy" id="316056"/>
    <lineage>
        <taxon>Bacteria</taxon>
        <taxon>Pseudomonadati</taxon>
        <taxon>Pseudomonadota</taxon>
        <taxon>Alphaproteobacteria</taxon>
        <taxon>Hyphomicrobiales</taxon>
        <taxon>Nitrobacteraceae</taxon>
        <taxon>Rhodopseudomonas</taxon>
    </lineage>
</organism>
<proteinExistence type="inferred from homology"/>
<accession>Q21B58</accession>